<keyword id="KW-0066">ATP synthesis</keyword>
<keyword id="KW-0138">CF(0)</keyword>
<keyword id="KW-0150">Chloroplast</keyword>
<keyword id="KW-0375">Hydrogen ion transport</keyword>
<keyword id="KW-0406">Ion transport</keyword>
<keyword id="KW-0472">Membrane</keyword>
<keyword id="KW-0934">Plastid</keyword>
<keyword id="KW-0793">Thylakoid</keyword>
<keyword id="KW-0812">Transmembrane</keyword>
<keyword id="KW-1133">Transmembrane helix</keyword>
<keyword id="KW-0813">Transport</keyword>
<feature type="chain" id="PRO_0000362603" description="ATP synthase subunit a, chloroplastic">
    <location>
        <begin position="1"/>
        <end position="247"/>
    </location>
</feature>
<feature type="transmembrane region" description="Helical" evidence="1">
    <location>
        <begin position="38"/>
        <end position="58"/>
    </location>
</feature>
<feature type="transmembrane region" description="Helical" evidence="1">
    <location>
        <begin position="95"/>
        <end position="115"/>
    </location>
</feature>
<feature type="transmembrane region" description="Helical" evidence="1">
    <location>
        <begin position="134"/>
        <end position="154"/>
    </location>
</feature>
<feature type="transmembrane region" description="Helical" evidence="1">
    <location>
        <begin position="199"/>
        <end position="219"/>
    </location>
</feature>
<feature type="transmembrane region" description="Helical" evidence="1">
    <location>
        <begin position="220"/>
        <end position="240"/>
    </location>
</feature>
<dbReference type="EMBL" id="EU017279">
    <property type="protein sequence ID" value="ABU85686.1"/>
    <property type="molecule type" value="Genomic_DNA"/>
</dbReference>
<dbReference type="EMBL" id="EU090187">
    <property type="protein sequence ID" value="ABV26522.1"/>
    <property type="molecule type" value="Genomic_DNA"/>
</dbReference>
<dbReference type="RefSeq" id="YP_001718697.1">
    <property type="nucleotide sequence ID" value="NC_010442.1"/>
</dbReference>
<dbReference type="SMR" id="A9QC93"/>
<dbReference type="GeneID" id="6155868"/>
<dbReference type="GO" id="GO:0009535">
    <property type="term" value="C:chloroplast thylakoid membrane"/>
    <property type="evidence" value="ECO:0007669"/>
    <property type="project" value="UniProtKB-SubCell"/>
</dbReference>
<dbReference type="GO" id="GO:0005886">
    <property type="term" value="C:plasma membrane"/>
    <property type="evidence" value="ECO:0007669"/>
    <property type="project" value="UniProtKB-UniRule"/>
</dbReference>
<dbReference type="GO" id="GO:0045259">
    <property type="term" value="C:proton-transporting ATP synthase complex"/>
    <property type="evidence" value="ECO:0007669"/>
    <property type="project" value="UniProtKB-KW"/>
</dbReference>
<dbReference type="GO" id="GO:0046933">
    <property type="term" value="F:proton-transporting ATP synthase activity, rotational mechanism"/>
    <property type="evidence" value="ECO:0007669"/>
    <property type="project" value="UniProtKB-UniRule"/>
</dbReference>
<dbReference type="CDD" id="cd00310">
    <property type="entry name" value="ATP-synt_Fo_a_6"/>
    <property type="match status" value="1"/>
</dbReference>
<dbReference type="FunFam" id="1.20.120.220:FF:000001">
    <property type="entry name" value="ATP synthase subunit a, chloroplastic"/>
    <property type="match status" value="1"/>
</dbReference>
<dbReference type="Gene3D" id="1.20.120.220">
    <property type="entry name" value="ATP synthase, F0 complex, subunit A"/>
    <property type="match status" value="1"/>
</dbReference>
<dbReference type="HAMAP" id="MF_01393">
    <property type="entry name" value="ATP_synth_a_bact"/>
    <property type="match status" value="1"/>
</dbReference>
<dbReference type="InterPro" id="IPR045082">
    <property type="entry name" value="ATP_syn_F0_a_bact/chloroplast"/>
</dbReference>
<dbReference type="InterPro" id="IPR000568">
    <property type="entry name" value="ATP_synth_F0_asu"/>
</dbReference>
<dbReference type="InterPro" id="IPR023011">
    <property type="entry name" value="ATP_synth_F0_asu_AS"/>
</dbReference>
<dbReference type="InterPro" id="IPR035908">
    <property type="entry name" value="F0_ATP_A_sf"/>
</dbReference>
<dbReference type="NCBIfam" id="TIGR01131">
    <property type="entry name" value="ATP_synt_6_or_A"/>
    <property type="match status" value="1"/>
</dbReference>
<dbReference type="PANTHER" id="PTHR42823">
    <property type="entry name" value="ATP SYNTHASE SUBUNIT A, CHLOROPLASTIC"/>
    <property type="match status" value="1"/>
</dbReference>
<dbReference type="PANTHER" id="PTHR42823:SF3">
    <property type="entry name" value="ATP SYNTHASE SUBUNIT A, CHLOROPLASTIC"/>
    <property type="match status" value="1"/>
</dbReference>
<dbReference type="Pfam" id="PF00119">
    <property type="entry name" value="ATP-synt_A"/>
    <property type="match status" value="1"/>
</dbReference>
<dbReference type="PRINTS" id="PR00123">
    <property type="entry name" value="ATPASEA"/>
</dbReference>
<dbReference type="SUPFAM" id="SSF81336">
    <property type="entry name" value="F1F0 ATP synthase subunit A"/>
    <property type="match status" value="1"/>
</dbReference>
<dbReference type="PROSITE" id="PS00449">
    <property type="entry name" value="ATPASE_A"/>
    <property type="match status" value="1"/>
</dbReference>
<proteinExistence type="inferred from homology"/>
<name>ATPI_TRACE</name>
<organism>
    <name type="scientific">Trachelium caeruleum</name>
    <name type="common">Blue throatwort</name>
    <dbReference type="NCBI Taxonomy" id="28494"/>
    <lineage>
        <taxon>Eukaryota</taxon>
        <taxon>Viridiplantae</taxon>
        <taxon>Streptophyta</taxon>
        <taxon>Embryophyta</taxon>
        <taxon>Tracheophyta</taxon>
        <taxon>Spermatophyta</taxon>
        <taxon>Magnoliopsida</taxon>
        <taxon>eudicotyledons</taxon>
        <taxon>Gunneridae</taxon>
        <taxon>Pentapetalae</taxon>
        <taxon>asterids</taxon>
        <taxon>campanulids</taxon>
        <taxon>Asterales</taxon>
        <taxon>Campanulaceae</taxon>
        <taxon>Trachelium</taxon>
    </lineage>
</organism>
<comment type="function">
    <text evidence="1">Key component of the proton channel; it plays a direct role in the translocation of protons across the membrane.</text>
</comment>
<comment type="subunit">
    <text evidence="1">F-type ATPases have 2 components, CF(1) - the catalytic core - and CF(0) - the membrane proton channel. CF(1) has five subunits: alpha(3), beta(3), gamma(1), delta(1), epsilon(1). CF(0) has four main subunits: a, b, b' and c.</text>
</comment>
<comment type="subcellular location">
    <subcellularLocation>
        <location evidence="1">Plastid</location>
        <location evidence="1">Chloroplast thylakoid membrane</location>
        <topology evidence="1">Multi-pass membrane protein</topology>
    </subcellularLocation>
</comment>
<comment type="similarity">
    <text evidence="1">Belongs to the ATPase A chain family.</text>
</comment>
<evidence type="ECO:0000255" key="1">
    <source>
        <dbReference type="HAMAP-Rule" id="MF_01393"/>
    </source>
</evidence>
<accession>A9QC93</accession>
<geneLocation type="chloroplast"/>
<reference key="1">
    <citation type="journal article" date="2007" name="Proc. Natl. Acad. Sci. U.S.A.">
        <title>Analysis of 81 genes from 64 plastid genomes resolves relationships in angiosperms and identifies genome-scale evolutionary patterns.</title>
        <authorList>
            <person name="Jansen R.K."/>
            <person name="Cai Z."/>
            <person name="Raubeson L.A."/>
            <person name="Daniell H."/>
            <person name="dePamphilis C.W."/>
            <person name="Leebens-Mack J."/>
            <person name="Muller K.F."/>
            <person name="Guisinger-Bellian M."/>
            <person name="Haberle R.C."/>
            <person name="Hansen A.K."/>
            <person name="Chumley T.W."/>
            <person name="Lee S.B."/>
            <person name="Peery R."/>
            <person name="McNeal J.R."/>
            <person name="Kuehl J.V."/>
            <person name="Boore J.L."/>
        </authorList>
    </citation>
    <scope>NUCLEOTIDE SEQUENCE [GENOMIC DNA]</scope>
</reference>
<reference key="2">
    <citation type="journal article" date="2008" name="J. Mol. Evol.">
        <title>Extensive rearrangements in the chloroplast genome of Trachelium caeruleum are associated with repeats and tRNA genes.</title>
        <authorList>
            <person name="Haberle R.C."/>
            <person name="Fourcade H.M."/>
            <person name="Boore J.L."/>
            <person name="Jansen R.K."/>
        </authorList>
    </citation>
    <scope>NUCLEOTIDE SEQUENCE [LARGE SCALE GENOMIC DNA]</scope>
</reference>
<protein>
    <recommendedName>
        <fullName evidence="1">ATP synthase subunit a, chloroplastic</fullName>
    </recommendedName>
    <alternativeName>
        <fullName evidence="1">ATP synthase F0 sector subunit a</fullName>
    </alternativeName>
    <alternativeName>
        <fullName evidence="1">F-ATPase subunit IV</fullName>
    </alternativeName>
</protein>
<sequence>MNILSCSTNILNGFYDISGVEVGQHFYWKIGGFQVHGQVLITSWVVIAILLGSAALAVRKPQTIPTGIQNFFEYVLEFIRDVSKTQIGEEYGPWVPFIGTIFLFIFVSNWSGALLPWKIIQLPHGELAAPTNDINTTVALALLTSVAYFYAGLAKKGLGYFGKYIQPTPILLPINILEDFTKPLSLSFRLFGNILADELVVVVLVSLVPSVVPIPVMFLGLFTSGIQALIFATLAAAYIGESMEGHH</sequence>
<gene>
    <name evidence="1" type="primary">atpI</name>
</gene>